<feature type="chain" id="PRO_0000046221" description="Plasma membrane calcium-transporting ATPase 4">
    <location>
        <begin position="1"/>
        <end position="1203"/>
    </location>
</feature>
<feature type="topological domain" description="Cytoplasmic" evidence="6">
    <location>
        <begin position="1"/>
        <end position="92"/>
    </location>
</feature>
<feature type="transmembrane region" description="Helical" evidence="6">
    <location>
        <begin position="93"/>
        <end position="113"/>
    </location>
</feature>
<feature type="topological domain" description="Extracellular" evidence="6">
    <location>
        <begin position="114"/>
        <end position="150"/>
    </location>
</feature>
<feature type="transmembrane region" description="Helical" evidence="6">
    <location>
        <begin position="151"/>
        <end position="171"/>
    </location>
</feature>
<feature type="topological domain" description="Cytoplasmic" evidence="6">
    <location>
        <begin position="172"/>
        <end position="356"/>
    </location>
</feature>
<feature type="transmembrane region" description="Helical" evidence="6">
    <location>
        <begin position="357"/>
        <end position="376"/>
    </location>
</feature>
<feature type="topological domain" description="Extracellular" evidence="6">
    <location>
        <begin position="377"/>
        <end position="409"/>
    </location>
</feature>
<feature type="transmembrane region" description="Helical" evidence="6">
    <location>
        <begin position="410"/>
        <end position="427"/>
    </location>
</feature>
<feature type="topological domain" description="Cytoplasmic" evidence="6">
    <location>
        <begin position="428"/>
        <end position="840"/>
    </location>
</feature>
<feature type="transmembrane region" description="Helical" evidence="6">
    <location>
        <begin position="841"/>
        <end position="860"/>
    </location>
</feature>
<feature type="topological domain" description="Extracellular" evidence="6">
    <location>
        <begin position="861"/>
        <end position="870"/>
    </location>
</feature>
<feature type="transmembrane region" description="Helical" evidence="6">
    <location>
        <begin position="871"/>
        <end position="891"/>
    </location>
</feature>
<feature type="topological domain" description="Cytoplasmic" evidence="6">
    <location>
        <begin position="892"/>
        <end position="911"/>
    </location>
</feature>
<feature type="transmembrane region" description="Helical" evidence="6">
    <location>
        <begin position="912"/>
        <end position="934"/>
    </location>
</feature>
<feature type="topological domain" description="Extracellular" evidence="6">
    <location>
        <begin position="935"/>
        <end position="952"/>
    </location>
</feature>
<feature type="transmembrane region" description="Helical" evidence="6">
    <location>
        <begin position="953"/>
        <end position="974"/>
    </location>
</feature>
<feature type="topological domain" description="Cytoplasmic" evidence="6">
    <location>
        <begin position="975"/>
        <end position="993"/>
    </location>
</feature>
<feature type="transmembrane region" description="Helical" evidence="6">
    <location>
        <begin position="994"/>
        <end position="1015"/>
    </location>
</feature>
<feature type="topological domain" description="Extracellular" evidence="6">
    <location>
        <begin position="1016"/>
        <end position="1025"/>
    </location>
</feature>
<feature type="transmembrane region" description="Helical" evidence="6">
    <location>
        <begin position="1026"/>
        <end position="1047"/>
    </location>
</feature>
<feature type="topological domain" description="Cytoplasmic" evidence="6">
    <location>
        <begin position="1048"/>
        <end position="1203"/>
    </location>
</feature>
<feature type="region of interest" description="Disordered" evidence="7">
    <location>
        <begin position="294"/>
        <end position="319"/>
    </location>
</feature>
<feature type="region of interest" description="Disordered" evidence="7">
    <location>
        <begin position="330"/>
        <end position="349"/>
    </location>
</feature>
<feature type="region of interest" description="Calmodulin-binding subdomain A" evidence="3 4">
    <location>
        <begin position="1086"/>
        <end position="1103"/>
    </location>
</feature>
<feature type="region of interest" description="Calmodulin-binding subdomain B" evidence="3">
    <location>
        <begin position="1104"/>
        <end position="1113"/>
    </location>
</feature>
<feature type="compositionally biased region" description="Basic and acidic residues" evidence="7">
    <location>
        <begin position="334"/>
        <end position="349"/>
    </location>
</feature>
<feature type="active site" description="4-aspartylphosphate intermediate" evidence="2">
    <location>
        <position position="465"/>
    </location>
</feature>
<feature type="binding site" evidence="1">
    <location>
        <position position="785"/>
    </location>
    <ligand>
        <name>Mg(2+)</name>
        <dbReference type="ChEBI" id="CHEBI:18420"/>
    </ligand>
</feature>
<feature type="binding site" evidence="1">
    <location>
        <position position="789"/>
    </location>
    <ligand>
        <name>Mg(2+)</name>
        <dbReference type="ChEBI" id="CHEBI:18420"/>
    </ligand>
</feature>
<feature type="modified residue" description="Phosphoserine" evidence="4">
    <location>
        <position position="13"/>
    </location>
</feature>
<feature type="modified residue" description="Phosphoserine" evidence="14">
    <location>
        <position position="328"/>
    </location>
</feature>
<feature type="modified residue" description="Phosphoserine" evidence="14">
    <location>
        <position position="334"/>
    </location>
</feature>
<feature type="modified residue" description="Phosphoserine" evidence="14">
    <location>
        <position position="1064"/>
    </location>
</feature>
<feature type="modified residue" description="Phosphoserine" evidence="14">
    <location>
        <position position="1070"/>
    </location>
</feature>
<feature type="modified residue" description="Phosphothreonine; by PKC" evidence="1">
    <location>
        <position position="1102"/>
    </location>
</feature>
<feature type="modified residue" description="Phosphoserine" evidence="5">
    <location>
        <position position="1144"/>
    </location>
</feature>
<feature type="splice variant" id="VSP_000406" description="In isoform ZA and isoform ZB." evidence="10">
    <location>
        <begin position="301"/>
        <end position="312"/>
    </location>
</feature>
<feature type="splice variant" id="VSP_000407" description="In isoform XA and isoform ZA." evidence="10">
    <original>RVVKVFHSFRDVIHKSKNQVSIHSFMTQPEYAADDEMSQSFLNQEESPSLASKSRITKRLSDAETVSQNNTNNNAVDCHQVQIVASHPNSPLQSQETPV</original>
    <variation>EVINKFQTGASFKGVLRRQNLSQQLDVKLVPSSYSEAVASVRTSPSTSSAVTPPPVGNQSGQSIS</variation>
    <location>
        <begin position="1105"/>
        <end position="1203"/>
    </location>
</feature>
<feature type="sequence conflict" description="In Ref. 2; CAA53990." evidence="12" ref="2">
    <original>I</original>
    <variation>V</variation>
    <location>
        <position position="431"/>
    </location>
</feature>
<feature type="modified residue" description="Phosphoserine" evidence="14">
    <location sequence="Q64542-2">
        <position position="1115"/>
    </location>
</feature>
<feature type="modified residue" description="Phosphoserine" evidence="14">
    <location sequence="Q64542-2">
        <position position="1126"/>
    </location>
</feature>
<feature type="modified residue" description="Phosphoserine" evidence="14">
    <location sequence="Q64542-3">
        <position position="1103"/>
    </location>
</feature>
<feature type="modified residue" description="Phosphoserine" evidence="14">
    <location sequence="Q64542-3">
        <position position="1114"/>
    </location>
</feature>
<comment type="function">
    <text evidence="4 5">Calcium/calmodulin-regulated and magnesium-dependent enzyme that catalyzes the hydrolysis of ATP coupled with the transport of calcium out of the cell (By similarity). By regulating sperm cell calcium homeostasis, may play a role in sperm motility (By similarity).</text>
</comment>
<comment type="catalytic activity">
    <reaction evidence="4">
        <text>Ca(2+)(in) + ATP + H2O = Ca(2+)(out) + ADP + phosphate + H(+)</text>
        <dbReference type="Rhea" id="RHEA:18105"/>
        <dbReference type="ChEBI" id="CHEBI:15377"/>
        <dbReference type="ChEBI" id="CHEBI:15378"/>
        <dbReference type="ChEBI" id="CHEBI:29108"/>
        <dbReference type="ChEBI" id="CHEBI:30616"/>
        <dbReference type="ChEBI" id="CHEBI:43474"/>
        <dbReference type="ChEBI" id="CHEBI:456216"/>
        <dbReference type="EC" id="7.2.2.10"/>
    </reaction>
</comment>
<comment type="activity regulation">
    <text evidence="4">Activated by calcium/calmodulin.</text>
</comment>
<comment type="subunit">
    <text evidence="4">Interacts with PDZD11. Interacts with SLC35G1 and STIM1. Interacts with calmodulin.</text>
</comment>
<comment type="subcellular location">
    <subcellularLocation>
        <location evidence="4">Cell membrane</location>
        <topology evidence="6">Multi-pass membrane protein</topology>
    </subcellularLocation>
    <subcellularLocation>
        <location evidence="5">Cell projection</location>
        <location evidence="5">Cilium</location>
        <location evidence="5">Flagellum membrane</location>
        <topology evidence="6">Multi-pass membrane protein</topology>
    </subcellularLocation>
</comment>
<comment type="alternative products">
    <event type="alternative splicing"/>
    <isoform>
        <id>Q64542-1</id>
        <name>XB</name>
        <name>AIICI</name>
        <sequence type="displayed"/>
    </isoform>
    <isoform>
        <id>Q64542-2</id>
        <name>XA</name>
        <name>AIICII</name>
        <sequence type="described" ref="VSP_000407"/>
    </isoform>
    <isoform>
        <id>Q64542-3</id>
        <name>ZA</name>
        <name>AICII</name>
        <sequence type="described" ref="VSP_000406 VSP_000407"/>
    </isoform>
    <isoform>
        <id>Q64542-4</id>
        <name>ZB</name>
        <name>AICI</name>
        <sequence type="described" ref="VSP_000406"/>
    </isoform>
    <text>There is a combination of two alternatively spliced domains at N-terminal site A (X and Z) and at C-terminal site C (A and B).</text>
</comment>
<comment type="tissue specificity">
    <text evidence="8 9">Ubiquitously expressed. Not detected in liver. The highest levels are found in uterus and stomach. Isoform XA is found in uterus, brain, stomach, small intestine, colon and pancreas. Isoform XB is found in uterus, skeletal muscle, lung, kidney, spleen, stomach, small intestine and pancreas. Isoform ZA is found in testis and isoform ZB is found in testis and heart.</text>
</comment>
<comment type="similarity">
    <text evidence="12">Belongs to the cation transport ATPase (P-type) (TC 3.A.3) family. Type IIB subfamily.</text>
</comment>
<name>AT2B4_RAT</name>
<protein>
    <recommendedName>
        <fullName evidence="12">Plasma membrane calcium-transporting ATPase 4</fullName>
        <shortName evidence="10 11">PMCA4</shortName>
        <ecNumber evidence="4">7.2.2.10</ecNumber>
    </recommendedName>
    <alternativeName>
        <fullName evidence="10">Plasma membrane calcium ATPase isoform 4</fullName>
    </alternativeName>
    <alternativeName>
        <fullName evidence="11">Plasma membrane calcium pump isoform 4</fullName>
    </alternativeName>
</protein>
<gene>
    <name evidence="13" type="primary">Atp2b4</name>
</gene>
<reference key="1">
    <citation type="journal article" date="1995" name="Biochem. J.">
        <title>Primary structure of rat plasma membrane Ca(2+)-ATPase isoform 4 and analysis of alternative splicing patterns at splice site A.</title>
        <authorList>
            <person name="Keeton T.P."/>
            <person name="Shull G.E."/>
        </authorList>
    </citation>
    <scope>NUCLEOTIDE SEQUENCE [MRNA] (ISOFORMS XB; ZB; XA AND ZA)</scope>
    <scope>TISSUE SPECIFICITY</scope>
    <source>
        <strain>CD Charles River</strain>
        <tissue>Testis</tissue>
    </source>
</reference>
<reference key="2">
    <citation type="journal article" date="1994" name="Biochem. J.">
        <title>Plasma-membrane calcium-pump isoforms in human and rat liver.</title>
        <authorList>
            <person name="Howard A."/>
            <person name="Barley N.F."/>
            <person name="Legon S."/>
            <person name="Walters J.R.F."/>
        </authorList>
    </citation>
    <scope>NUCLEOTIDE SEQUENCE [MRNA] OF 266-455 (ISOFORMS XA/XB)</scope>
    <source>
        <tissue>Lung</tissue>
    </source>
</reference>
<reference key="3">
    <citation type="journal article" date="1993" name="J. Biol. Chem.">
        <title>Alternative splicing of exons encoding the calmodulin-binding domains and C termini of plasma membrane Ca(2+)-ATPase isoforms 1, 2, 3, and 4.</title>
        <authorList>
            <person name="Keeton T.P."/>
            <person name="Burk S.E."/>
            <person name="Shull G.E."/>
        </authorList>
    </citation>
    <scope>NUCLEOTIDE SEQUENCE [GENOMIC DNA] OF 1081-1203</scope>
    <scope>ALTERNATIVE SPLICING (ISOFORMS XA/ZA)</scope>
    <scope>TISSUE SPECIFICITY</scope>
    <source>
        <strain>Sprague-Dawley</strain>
    </source>
</reference>
<reference key="4">
    <citation type="journal article" date="2012" name="Nat. Commun.">
        <title>Quantitative maps of protein phosphorylation sites across 14 different rat organs and tissues.</title>
        <authorList>
            <person name="Lundby A."/>
            <person name="Secher A."/>
            <person name="Lage K."/>
            <person name="Nordsborg N.B."/>
            <person name="Dmytriyev A."/>
            <person name="Lundby C."/>
            <person name="Olsen J.V."/>
        </authorList>
    </citation>
    <scope>PHOSPHORYLATION [LARGE SCALE ANALYSIS] AT SER-328; SER-334; SER-1064 AND SER-1070</scope>
    <scope>PHOSPHORYLATION [LARGE SCALE ANALYSIS] AT SER-1115 AND SER-1126 (ISOFORM XA)</scope>
    <scope>PHOSPHORYLATION [LARGE SCALE ANALYSIS] AT SER-1103 AND SER-1114 (ISOFORM ZA)</scope>
    <scope>IDENTIFICATION BY MASS SPECTROMETRY [LARGE SCALE ANALYSIS]</scope>
</reference>
<organism>
    <name type="scientific">Rattus norvegicus</name>
    <name type="common">Rat</name>
    <dbReference type="NCBI Taxonomy" id="10116"/>
    <lineage>
        <taxon>Eukaryota</taxon>
        <taxon>Metazoa</taxon>
        <taxon>Chordata</taxon>
        <taxon>Craniata</taxon>
        <taxon>Vertebrata</taxon>
        <taxon>Euteleostomi</taxon>
        <taxon>Mammalia</taxon>
        <taxon>Eutheria</taxon>
        <taxon>Euarchontoglires</taxon>
        <taxon>Glires</taxon>
        <taxon>Rodentia</taxon>
        <taxon>Myomorpha</taxon>
        <taxon>Muroidea</taxon>
        <taxon>Muridae</taxon>
        <taxon>Murinae</taxon>
        <taxon>Rattus</taxon>
    </lineage>
</organism>
<dbReference type="EC" id="7.2.2.10" evidence="4"/>
<dbReference type="EMBL" id="U15408">
    <property type="protein sequence ID" value="AAA81005.1"/>
    <property type="molecule type" value="mRNA"/>
</dbReference>
<dbReference type="EMBL" id="U15408">
    <property type="protein sequence ID" value="AAA81006.1"/>
    <property type="molecule type" value="mRNA"/>
</dbReference>
<dbReference type="EMBL" id="U15408">
    <property type="protein sequence ID" value="AAA81007.1"/>
    <property type="molecule type" value="mRNA"/>
</dbReference>
<dbReference type="EMBL" id="U15408">
    <property type="protein sequence ID" value="AAA81008.1"/>
    <property type="molecule type" value="mRNA"/>
</dbReference>
<dbReference type="EMBL" id="X76452">
    <property type="protein sequence ID" value="CAA53990.1"/>
    <property type="molecule type" value="mRNA"/>
</dbReference>
<dbReference type="EMBL" id="L05569">
    <property type="protein sequence ID" value="AAA50820.1"/>
    <property type="molecule type" value="Genomic_DNA"/>
</dbReference>
<dbReference type="EMBL" id="L05566">
    <property type="protein sequence ID" value="AAA50820.1"/>
    <property type="status" value="JOINED"/>
    <property type="molecule type" value="Genomic_DNA"/>
</dbReference>
<dbReference type="EMBL" id="L05567">
    <property type="protein sequence ID" value="AAA50820.1"/>
    <property type="status" value="JOINED"/>
    <property type="molecule type" value="Genomic_DNA"/>
</dbReference>
<dbReference type="PIR" id="G44525">
    <property type="entry name" value="G44525"/>
</dbReference>
<dbReference type="PIR" id="S50027">
    <property type="entry name" value="S50027"/>
</dbReference>
<dbReference type="PIR" id="S54356">
    <property type="entry name" value="S54356"/>
</dbReference>
<dbReference type="PIR" id="S54357">
    <property type="entry name" value="S54357"/>
</dbReference>
<dbReference type="RefSeq" id="NP_001005871.1">
    <molecule id="Q64542-2"/>
    <property type="nucleotide sequence ID" value="NM_001005871.1"/>
</dbReference>
<dbReference type="RefSeq" id="XP_008767668.1">
    <molecule id="Q64542-1"/>
    <property type="nucleotide sequence ID" value="XM_008769446.4"/>
</dbReference>
<dbReference type="RefSeq" id="XP_008767669.1">
    <property type="nucleotide sequence ID" value="XM_008769447.2"/>
</dbReference>
<dbReference type="RefSeq" id="XP_008767670.1">
    <property type="nucleotide sequence ID" value="XM_008769448.2"/>
</dbReference>
<dbReference type="RefSeq" id="XP_008767671.1">
    <property type="nucleotide sequence ID" value="XM_008769449.2"/>
</dbReference>
<dbReference type="RefSeq" id="XP_008767672.1">
    <property type="nucleotide sequence ID" value="XM_008769450.2"/>
</dbReference>
<dbReference type="RefSeq" id="XP_038946568.1">
    <molecule id="Q64542-1"/>
    <property type="nucleotide sequence ID" value="XM_039090640.2"/>
</dbReference>
<dbReference type="RefSeq" id="XP_038946569.1">
    <molecule id="Q64542-1"/>
    <property type="nucleotide sequence ID" value="XM_039090641.2"/>
</dbReference>
<dbReference type="RefSeq" id="XP_038946570.1">
    <molecule id="Q64542-4"/>
    <property type="nucleotide sequence ID" value="XM_039090642.2"/>
</dbReference>
<dbReference type="RefSeq" id="XP_038946571.1">
    <molecule id="Q64542-2"/>
    <property type="nucleotide sequence ID" value="XM_039090643.2"/>
</dbReference>
<dbReference type="RefSeq" id="XP_038946572.1">
    <molecule id="Q64542-3"/>
    <property type="nucleotide sequence ID" value="XM_039090644.2"/>
</dbReference>
<dbReference type="RefSeq" id="XP_063128279.1">
    <molecule id="Q64542-2"/>
    <property type="nucleotide sequence ID" value="XM_063272209.1"/>
</dbReference>
<dbReference type="SMR" id="Q64542"/>
<dbReference type="BioGRID" id="248232">
    <property type="interactions" value="2"/>
</dbReference>
<dbReference type="FunCoup" id="Q64542">
    <property type="interactions" value="1563"/>
</dbReference>
<dbReference type="IntAct" id="Q64542">
    <property type="interactions" value="2"/>
</dbReference>
<dbReference type="MINT" id="Q64542"/>
<dbReference type="STRING" id="10116.ENSRNOP00000004078"/>
<dbReference type="iPTMnet" id="Q64542"/>
<dbReference type="PhosphoSitePlus" id="Q64542"/>
<dbReference type="jPOST" id="Q64542"/>
<dbReference type="PaxDb" id="10116-ENSRNOP00000004078"/>
<dbReference type="Ensembl" id="ENSRNOT00000004078.7">
    <molecule id="Q64542-2"/>
    <property type="protein sequence ID" value="ENSRNOP00000004078.6"/>
    <property type="gene ID" value="ENSRNOG00000003031.8"/>
</dbReference>
<dbReference type="Ensembl" id="ENSRNOT00000046273.5">
    <molecule id="Q64542-1"/>
    <property type="protein sequence ID" value="ENSRNOP00000039880.5"/>
    <property type="gene ID" value="ENSRNOG00000003031.8"/>
</dbReference>
<dbReference type="Ensembl" id="ENSRNOT00000112237.1">
    <molecule id="Q64542-4"/>
    <property type="protein sequence ID" value="ENSRNOP00000080557.1"/>
    <property type="gene ID" value="ENSRNOG00000003031.8"/>
</dbReference>
<dbReference type="GeneID" id="29600"/>
<dbReference type="KEGG" id="rno:29600"/>
<dbReference type="UCSC" id="RGD:621305">
    <molecule id="Q64542-1"/>
    <property type="organism name" value="rat"/>
</dbReference>
<dbReference type="AGR" id="RGD:621305"/>
<dbReference type="CTD" id="493"/>
<dbReference type="RGD" id="621305">
    <property type="gene designation" value="Atp2b4"/>
</dbReference>
<dbReference type="eggNOG" id="KOG0204">
    <property type="taxonomic scope" value="Eukaryota"/>
</dbReference>
<dbReference type="GeneTree" id="ENSGT00940000154527"/>
<dbReference type="InParanoid" id="Q64542"/>
<dbReference type="OMA" id="MINVHDI"/>
<dbReference type="OrthoDB" id="116380at2759"/>
<dbReference type="PhylomeDB" id="Q64542"/>
<dbReference type="Reactome" id="R-RNO-418359">
    <property type="pathway name" value="Reduction of cytosolic Ca++ levels"/>
</dbReference>
<dbReference type="Reactome" id="R-RNO-5578775">
    <property type="pathway name" value="Ion homeostasis"/>
</dbReference>
<dbReference type="Reactome" id="R-RNO-936837">
    <property type="pathway name" value="Ion transport by P-type ATPases"/>
</dbReference>
<dbReference type="PRO" id="PR:Q64542"/>
<dbReference type="Proteomes" id="UP000002494">
    <property type="component" value="Chromosome 13"/>
</dbReference>
<dbReference type="Bgee" id="ENSRNOG00000003031">
    <property type="expression patterns" value="Expressed in frontal cortex and 20 other cell types or tissues"/>
</dbReference>
<dbReference type="GO" id="GO:0016323">
    <property type="term" value="C:basolateral plasma membrane"/>
    <property type="evidence" value="ECO:0000314"/>
    <property type="project" value="RGD"/>
</dbReference>
<dbReference type="GO" id="GO:0036064">
    <property type="term" value="C:ciliary basal body"/>
    <property type="evidence" value="ECO:0007669"/>
    <property type="project" value="Ensembl"/>
</dbReference>
<dbReference type="GO" id="GO:0098978">
    <property type="term" value="C:glutamatergic synapse"/>
    <property type="evidence" value="ECO:0000314"/>
    <property type="project" value="SynGO"/>
</dbReference>
<dbReference type="GO" id="GO:0043231">
    <property type="term" value="C:intracellular membrane-bounded organelle"/>
    <property type="evidence" value="ECO:0000318"/>
    <property type="project" value="GO_Central"/>
</dbReference>
<dbReference type="GO" id="GO:0016020">
    <property type="term" value="C:membrane"/>
    <property type="evidence" value="ECO:0000266"/>
    <property type="project" value="RGD"/>
</dbReference>
<dbReference type="GO" id="GO:0045121">
    <property type="term" value="C:membrane raft"/>
    <property type="evidence" value="ECO:0000266"/>
    <property type="project" value="RGD"/>
</dbReference>
<dbReference type="GO" id="GO:0005739">
    <property type="term" value="C:mitochondrion"/>
    <property type="evidence" value="ECO:0007669"/>
    <property type="project" value="Ensembl"/>
</dbReference>
<dbReference type="GO" id="GO:0005886">
    <property type="term" value="C:plasma membrane"/>
    <property type="evidence" value="ECO:0000318"/>
    <property type="project" value="GO_Central"/>
</dbReference>
<dbReference type="GO" id="GO:0048787">
    <property type="term" value="C:presynaptic active zone membrane"/>
    <property type="evidence" value="ECO:0000314"/>
    <property type="project" value="SynGO"/>
</dbReference>
<dbReference type="GO" id="GO:0042383">
    <property type="term" value="C:sarcolemma"/>
    <property type="evidence" value="ECO:0000266"/>
    <property type="project" value="RGD"/>
</dbReference>
<dbReference type="GO" id="GO:0036126">
    <property type="term" value="C:sperm flagellum"/>
    <property type="evidence" value="ECO:0000266"/>
    <property type="project" value="RGD"/>
</dbReference>
<dbReference type="GO" id="GO:0097228">
    <property type="term" value="C:sperm principal piece"/>
    <property type="evidence" value="ECO:0000314"/>
    <property type="project" value="RGD"/>
</dbReference>
<dbReference type="GO" id="GO:0030315">
    <property type="term" value="C:T-tubule"/>
    <property type="evidence" value="ECO:0000266"/>
    <property type="project" value="RGD"/>
</dbReference>
<dbReference type="GO" id="GO:0030018">
    <property type="term" value="C:Z disc"/>
    <property type="evidence" value="ECO:0000266"/>
    <property type="project" value="RGD"/>
</dbReference>
<dbReference type="GO" id="GO:0005524">
    <property type="term" value="F:ATP binding"/>
    <property type="evidence" value="ECO:0007669"/>
    <property type="project" value="UniProtKB-KW"/>
</dbReference>
<dbReference type="GO" id="GO:0016887">
    <property type="term" value="F:ATP hydrolysis activity"/>
    <property type="evidence" value="ECO:0007669"/>
    <property type="project" value="InterPro"/>
</dbReference>
<dbReference type="GO" id="GO:0015085">
    <property type="term" value="F:calcium ion transmembrane transporter activity"/>
    <property type="evidence" value="ECO:0000266"/>
    <property type="project" value="RGD"/>
</dbReference>
<dbReference type="GO" id="GO:0005516">
    <property type="term" value="F:calmodulin binding"/>
    <property type="evidence" value="ECO:0000266"/>
    <property type="project" value="RGD"/>
</dbReference>
<dbReference type="GO" id="GO:0046872">
    <property type="term" value="F:metal ion binding"/>
    <property type="evidence" value="ECO:0007669"/>
    <property type="project" value="UniProtKB-KW"/>
</dbReference>
<dbReference type="GO" id="GO:0050998">
    <property type="term" value="F:nitric-oxide synthase binding"/>
    <property type="evidence" value="ECO:0000266"/>
    <property type="project" value="RGD"/>
</dbReference>
<dbReference type="GO" id="GO:0036487">
    <property type="term" value="F:nitric-oxide synthase inhibitor activity"/>
    <property type="evidence" value="ECO:0000266"/>
    <property type="project" value="RGD"/>
</dbReference>
<dbReference type="GO" id="GO:0005388">
    <property type="term" value="F:P-type calcium transporter activity"/>
    <property type="evidence" value="ECO:0000314"/>
    <property type="project" value="RGD"/>
</dbReference>
<dbReference type="GO" id="GO:0030165">
    <property type="term" value="F:PDZ domain binding"/>
    <property type="evidence" value="ECO:0000353"/>
    <property type="project" value="RGD"/>
</dbReference>
<dbReference type="GO" id="GO:0019901">
    <property type="term" value="F:protein kinase binding"/>
    <property type="evidence" value="ECO:0000353"/>
    <property type="project" value="RGD"/>
</dbReference>
<dbReference type="GO" id="GO:0030346">
    <property type="term" value="F:protein phosphatase 2B binding"/>
    <property type="evidence" value="ECO:0000266"/>
    <property type="project" value="RGD"/>
</dbReference>
<dbReference type="GO" id="GO:1901660">
    <property type="term" value="P:calcium ion export"/>
    <property type="evidence" value="ECO:0000315"/>
    <property type="project" value="RGD"/>
</dbReference>
<dbReference type="GO" id="GO:0070588">
    <property type="term" value="P:calcium ion transmembrane transport"/>
    <property type="evidence" value="ECO:0000315"/>
    <property type="project" value="RGD"/>
</dbReference>
<dbReference type="GO" id="GO:0006816">
    <property type="term" value="P:calcium ion transport"/>
    <property type="evidence" value="ECO:0000314"/>
    <property type="project" value="RGD"/>
</dbReference>
<dbReference type="GO" id="GO:1905145">
    <property type="term" value="P:cellular response to acetylcholine"/>
    <property type="evidence" value="ECO:0000250"/>
    <property type="project" value="UniProtKB"/>
</dbReference>
<dbReference type="GO" id="GO:0071872">
    <property type="term" value="P:cellular response to epinephrine stimulus"/>
    <property type="evidence" value="ECO:0000266"/>
    <property type="project" value="RGD"/>
</dbReference>
<dbReference type="GO" id="GO:0030317">
    <property type="term" value="P:flagellated sperm motility"/>
    <property type="evidence" value="ECO:0000250"/>
    <property type="project" value="UniProtKB"/>
</dbReference>
<dbReference type="GO" id="GO:0021766">
    <property type="term" value="P:hippocampus development"/>
    <property type="evidence" value="ECO:0000270"/>
    <property type="project" value="RGD"/>
</dbReference>
<dbReference type="GO" id="GO:0006874">
    <property type="term" value="P:intracellular calcium ion homeostasis"/>
    <property type="evidence" value="ECO:0000250"/>
    <property type="project" value="UniProtKB"/>
</dbReference>
<dbReference type="GO" id="GO:0071878">
    <property type="term" value="P:negative regulation of adenylate cyclase-activating adrenergic receptor signaling pathway"/>
    <property type="evidence" value="ECO:0000266"/>
    <property type="project" value="RGD"/>
</dbReference>
<dbReference type="GO" id="GO:0016525">
    <property type="term" value="P:negative regulation of angiogenesis"/>
    <property type="evidence" value="ECO:0000266"/>
    <property type="project" value="RGD"/>
</dbReference>
<dbReference type="GO" id="GO:1900082">
    <property type="term" value="P:negative regulation of arginine catabolic process"/>
    <property type="evidence" value="ECO:0000266"/>
    <property type="project" value="RGD"/>
</dbReference>
<dbReference type="GO" id="GO:0043537">
    <property type="term" value="P:negative regulation of blood vessel endothelial cell migration"/>
    <property type="evidence" value="ECO:0000266"/>
    <property type="project" value="RGD"/>
</dbReference>
<dbReference type="GO" id="GO:0070885">
    <property type="term" value="P:negative regulation of calcineurin-NFAT signaling cascade"/>
    <property type="evidence" value="ECO:0000315"/>
    <property type="project" value="BHF-UCL"/>
</dbReference>
<dbReference type="GO" id="GO:1903243">
    <property type="term" value="P:negative regulation of cardiac muscle hypertrophy in response to stress"/>
    <property type="evidence" value="ECO:0000266"/>
    <property type="project" value="RGD"/>
</dbReference>
<dbReference type="GO" id="GO:1902548">
    <property type="term" value="P:negative regulation of cellular response to vascular endothelial growth factor stimulus"/>
    <property type="evidence" value="ECO:0000266"/>
    <property type="project" value="RGD"/>
</dbReference>
<dbReference type="GO" id="GO:1903249">
    <property type="term" value="P:negative regulation of citrulline biosynthetic process"/>
    <property type="evidence" value="ECO:0000266"/>
    <property type="project" value="RGD"/>
</dbReference>
<dbReference type="GO" id="GO:0010629">
    <property type="term" value="P:negative regulation of gene expression"/>
    <property type="evidence" value="ECO:0000266"/>
    <property type="project" value="RGD"/>
</dbReference>
<dbReference type="GO" id="GO:0045019">
    <property type="term" value="P:negative regulation of nitric oxide biosynthetic process"/>
    <property type="evidence" value="ECO:0000266"/>
    <property type="project" value="RGD"/>
</dbReference>
<dbReference type="GO" id="GO:0098736">
    <property type="term" value="P:negative regulation of the force of heart contraction"/>
    <property type="evidence" value="ECO:0000266"/>
    <property type="project" value="RGD"/>
</dbReference>
<dbReference type="GO" id="GO:0003407">
    <property type="term" value="P:neural retina development"/>
    <property type="evidence" value="ECO:0000270"/>
    <property type="project" value="RGD"/>
</dbReference>
<dbReference type="GO" id="GO:0038060">
    <property type="term" value="P:nitric oxide-cGMP-mediated signaling"/>
    <property type="evidence" value="ECO:0000266"/>
    <property type="project" value="RGD"/>
</dbReference>
<dbReference type="GO" id="GO:1903078">
    <property type="term" value="P:positive regulation of protein localization to plasma membrane"/>
    <property type="evidence" value="ECO:0000266"/>
    <property type="project" value="RGD"/>
</dbReference>
<dbReference type="GO" id="GO:1902806">
    <property type="term" value="P:regulation of cell cycle G1/S phase transition"/>
    <property type="evidence" value="ECO:0000266"/>
    <property type="project" value="RGD"/>
</dbReference>
<dbReference type="GO" id="GO:0051480">
    <property type="term" value="P:regulation of cytosolic calcium ion concentration"/>
    <property type="evidence" value="ECO:0000318"/>
    <property type="project" value="GO_Central"/>
</dbReference>
<dbReference type="GO" id="GO:0006357">
    <property type="term" value="P:regulation of transcription by RNA polymerase II"/>
    <property type="evidence" value="ECO:0000266"/>
    <property type="project" value="RGD"/>
</dbReference>
<dbReference type="GO" id="GO:0051599">
    <property type="term" value="P:response to hydrostatic pressure"/>
    <property type="evidence" value="ECO:0000266"/>
    <property type="project" value="RGD"/>
</dbReference>
<dbReference type="GO" id="GO:0007283">
    <property type="term" value="P:spermatogenesis"/>
    <property type="evidence" value="ECO:0000270"/>
    <property type="project" value="RGD"/>
</dbReference>
<dbReference type="GO" id="GO:0014832">
    <property type="term" value="P:urinary bladder smooth muscle contraction"/>
    <property type="evidence" value="ECO:0000250"/>
    <property type="project" value="UniProtKB"/>
</dbReference>
<dbReference type="CDD" id="cd02081">
    <property type="entry name" value="P-type_ATPase_Ca_PMCA-like"/>
    <property type="match status" value="1"/>
</dbReference>
<dbReference type="FunFam" id="1.20.1110.10:FF:000001">
    <property type="entry name" value="Calcium-transporting ATPase"/>
    <property type="match status" value="1"/>
</dbReference>
<dbReference type="FunFam" id="1.20.1110.10:FF:000002">
    <property type="entry name" value="Calcium-transporting ATPase"/>
    <property type="match status" value="1"/>
</dbReference>
<dbReference type="FunFam" id="1.20.1110.10:FF:000008">
    <property type="entry name" value="Calcium-transporting ATPase"/>
    <property type="match status" value="1"/>
</dbReference>
<dbReference type="FunFam" id="2.70.150.10:FF:000001">
    <property type="entry name" value="Calcium-transporting ATPase"/>
    <property type="match status" value="1"/>
</dbReference>
<dbReference type="FunFam" id="3.40.1110.10:FF:000022">
    <property type="entry name" value="Calcium-transporting ATPase"/>
    <property type="match status" value="1"/>
</dbReference>
<dbReference type="FunFam" id="3.40.50.1000:FF:000007">
    <property type="entry name" value="Calcium-transporting ATPase"/>
    <property type="match status" value="1"/>
</dbReference>
<dbReference type="Gene3D" id="3.40.1110.10">
    <property type="entry name" value="Calcium-transporting ATPase, cytoplasmic domain N"/>
    <property type="match status" value="1"/>
</dbReference>
<dbReference type="Gene3D" id="2.70.150.10">
    <property type="entry name" value="Calcium-transporting ATPase, cytoplasmic transduction domain A"/>
    <property type="match status" value="1"/>
</dbReference>
<dbReference type="Gene3D" id="1.20.1110.10">
    <property type="entry name" value="Calcium-transporting ATPase, transmembrane domain"/>
    <property type="match status" value="3"/>
</dbReference>
<dbReference type="Gene3D" id="3.40.50.1000">
    <property type="entry name" value="HAD superfamily/HAD-like"/>
    <property type="match status" value="1"/>
</dbReference>
<dbReference type="InterPro" id="IPR022141">
    <property type="entry name" value="ATP_Ca_trans_C"/>
</dbReference>
<dbReference type="InterPro" id="IPR006068">
    <property type="entry name" value="ATPase_P-typ_cation-transptr_C"/>
</dbReference>
<dbReference type="InterPro" id="IPR004014">
    <property type="entry name" value="ATPase_P-typ_cation-transptr_N"/>
</dbReference>
<dbReference type="InterPro" id="IPR023299">
    <property type="entry name" value="ATPase_P-typ_cyto_dom_N"/>
</dbReference>
<dbReference type="InterPro" id="IPR018303">
    <property type="entry name" value="ATPase_P-typ_P_site"/>
</dbReference>
<dbReference type="InterPro" id="IPR023298">
    <property type="entry name" value="ATPase_P-typ_TM_dom_sf"/>
</dbReference>
<dbReference type="InterPro" id="IPR008250">
    <property type="entry name" value="ATPase_P-typ_transduc_dom_A_sf"/>
</dbReference>
<dbReference type="InterPro" id="IPR036412">
    <property type="entry name" value="HAD-like_sf"/>
</dbReference>
<dbReference type="InterPro" id="IPR023214">
    <property type="entry name" value="HAD_sf"/>
</dbReference>
<dbReference type="InterPro" id="IPR006408">
    <property type="entry name" value="P-type_ATPase_IIB"/>
</dbReference>
<dbReference type="InterPro" id="IPR001757">
    <property type="entry name" value="P_typ_ATPase"/>
</dbReference>
<dbReference type="InterPro" id="IPR044492">
    <property type="entry name" value="P_typ_ATPase_HD_dom"/>
</dbReference>
<dbReference type="NCBIfam" id="TIGR01517">
    <property type="entry name" value="ATPase-IIB_Ca"/>
    <property type="match status" value="1"/>
</dbReference>
<dbReference type="NCBIfam" id="TIGR01494">
    <property type="entry name" value="ATPase_P-type"/>
    <property type="match status" value="3"/>
</dbReference>
<dbReference type="PANTHER" id="PTHR24093">
    <property type="entry name" value="CATION TRANSPORTING ATPASE"/>
    <property type="match status" value="1"/>
</dbReference>
<dbReference type="PANTHER" id="PTHR24093:SF435">
    <property type="entry name" value="PLASMA MEMBRANE CALCIUM-TRANSPORTING ATPASE 4"/>
    <property type="match status" value="1"/>
</dbReference>
<dbReference type="Pfam" id="PF12424">
    <property type="entry name" value="ATP_Ca_trans_C"/>
    <property type="match status" value="1"/>
</dbReference>
<dbReference type="Pfam" id="PF13246">
    <property type="entry name" value="Cation_ATPase"/>
    <property type="match status" value="1"/>
</dbReference>
<dbReference type="Pfam" id="PF00689">
    <property type="entry name" value="Cation_ATPase_C"/>
    <property type="match status" value="1"/>
</dbReference>
<dbReference type="Pfam" id="PF00690">
    <property type="entry name" value="Cation_ATPase_N"/>
    <property type="match status" value="1"/>
</dbReference>
<dbReference type="Pfam" id="PF00122">
    <property type="entry name" value="E1-E2_ATPase"/>
    <property type="match status" value="2"/>
</dbReference>
<dbReference type="Pfam" id="PF00702">
    <property type="entry name" value="Hydrolase"/>
    <property type="match status" value="1"/>
</dbReference>
<dbReference type="PRINTS" id="PR00119">
    <property type="entry name" value="CATATPASE"/>
</dbReference>
<dbReference type="PRINTS" id="PR00121">
    <property type="entry name" value="NAKATPASE"/>
</dbReference>
<dbReference type="SFLD" id="SFLDG00002">
    <property type="entry name" value="C1.7:_P-type_atpase_like"/>
    <property type="match status" value="1"/>
</dbReference>
<dbReference type="SFLD" id="SFLDF00027">
    <property type="entry name" value="p-type_atpase"/>
    <property type="match status" value="1"/>
</dbReference>
<dbReference type="SMART" id="SM00831">
    <property type="entry name" value="Cation_ATPase_N"/>
    <property type="match status" value="1"/>
</dbReference>
<dbReference type="SUPFAM" id="SSF81653">
    <property type="entry name" value="Calcium ATPase, transduction domain A"/>
    <property type="match status" value="1"/>
</dbReference>
<dbReference type="SUPFAM" id="SSF81665">
    <property type="entry name" value="Calcium ATPase, transmembrane domain M"/>
    <property type="match status" value="1"/>
</dbReference>
<dbReference type="SUPFAM" id="SSF56784">
    <property type="entry name" value="HAD-like"/>
    <property type="match status" value="1"/>
</dbReference>
<dbReference type="SUPFAM" id="SSF81660">
    <property type="entry name" value="Metal cation-transporting ATPase, ATP-binding domain N"/>
    <property type="match status" value="1"/>
</dbReference>
<dbReference type="PROSITE" id="PS00154">
    <property type="entry name" value="ATPASE_E1_E2"/>
    <property type="match status" value="1"/>
</dbReference>
<accession>Q64542</accession>
<accession>Q63127</accession>
<accession>Q63445</accession>
<accession>Q64543</accession>
<accession>Q64544</accession>
<accession>Q64545</accession>
<keyword id="KW-0025">Alternative splicing</keyword>
<keyword id="KW-0067">ATP-binding</keyword>
<keyword id="KW-0106">Calcium</keyword>
<keyword id="KW-0109">Calcium transport</keyword>
<keyword id="KW-0112">Calmodulin-binding</keyword>
<keyword id="KW-1003">Cell membrane</keyword>
<keyword id="KW-0966">Cell projection</keyword>
<keyword id="KW-0969">Cilium</keyword>
<keyword id="KW-0282">Flagellum</keyword>
<keyword id="KW-0406">Ion transport</keyword>
<keyword id="KW-0460">Magnesium</keyword>
<keyword id="KW-0472">Membrane</keyword>
<keyword id="KW-0479">Metal-binding</keyword>
<keyword id="KW-0547">Nucleotide-binding</keyword>
<keyword id="KW-0597">Phosphoprotein</keyword>
<keyword id="KW-1185">Reference proteome</keyword>
<keyword id="KW-1278">Translocase</keyword>
<keyword id="KW-0812">Transmembrane</keyword>
<keyword id="KW-1133">Transmembrane helix</keyword>
<keyword id="KW-0813">Transport</keyword>
<proteinExistence type="evidence at protein level"/>
<sequence length="1203" mass="133094">MTNPSGHNLPANSVAESYEGEFGCTLMDLRKLMELRAADAVTQISAHYGSVQEICARLKTSPVEGLSGNPADLEKRRLVFGKNMIPPKKPKTFLELVWEALQDVTLIILEIAAIISLVLSFYRPPGGENEICGHIVSNPEEDEEGETGWIEGAAILASVIIVVFVTAFNDWSKEKQFRGLQSRIELEQKFSIIRNGQLIQLPVAEIVVGDIAQVKYGDLLPADGILIQGNDLKIDESSLTGESDHVKKTLDKDPMLLSGTHVMEGSGRMVVTAVGINSQTGIIFTLLGANEEEDDEKKKKGKKQGVSENRNKAKTQDGVALEIQPLNSQEGLDSEEKEKKASKGPKKEKSVLQGKLTRLAVQIGKAGLIMSILTVLILILYFVVDNFVIQRRAWLPECTPVYIQYFVKFFIIGVTVLVVAVPEGLPLAVTISLAYSVKKMMKDNNLVRHLDACETMGNATAICSDKTGTLTMNRMTVVQAYIGGTHYRQIPKPDDLPPNVLDLIVNSICINSAYTSKILPPEKEGGLPRQVGNKTECGLLGFVTDLKQDYQAVRSEMPEEKLFKVYTFNSVRKSMSTVIRKPEGGFRVFSKGASEIMLRKCDRILNKEGGIVPFKTKDRDNMVRNVIEPMASEGLRTIGIAYRDFDGEEPSWENENEIFTGLVCIAVVGIEDPVRPEVPDAINKCKRAGITVRMVTGDNVNTARAIATKCGILTPGDDFLCLEGKEFNRLIRNEKGEVEQEKLDKVWPRLRVLARSSPTDKHTLVKGIIDSNIGEQRQVVAVTGDGTNDGPALKKADVGFAMGIAGTDVAKEASDIILTDDNFTSIVKAVMWGRNVYDSISKFLQFQLTVNVVAVIVAFSGACITQDSPLKAVQMLWVNLIMDTFASLALATEPPTDSLLRRRPYGRNKPLISRTMMKNILGHAVYQLGIVFLLVFAGDKLFDIDSGRKAPLNSPPSQHYTIVFNTFVLMQLFNEINSRKIHGEKNVFAGVYRNIIFCSVVLGTFFCQILIVEVGGKPFSCTNLTMEQWMWCLFIGIGELLWGQVISAIPTKSLKFLKEAGHGSDKEEISKDAEGLEEIDHAEMELRRGQILWVRGLNRIQTQIRVVKVFHSFRDVIHKSKNQVSIHSFMTQPEYAADDEMSQSFLNQEESPSLASKSRITKRLSDAETVSQNNTNNNAVDCHQVQIVASHPNSPLQSQETPV</sequence>
<evidence type="ECO:0000250" key="1"/>
<evidence type="ECO:0000250" key="2">
    <source>
        <dbReference type="UniProtKB" id="P19156"/>
    </source>
</evidence>
<evidence type="ECO:0000250" key="3">
    <source>
        <dbReference type="UniProtKB" id="P20020"/>
    </source>
</evidence>
<evidence type="ECO:0000250" key="4">
    <source>
        <dbReference type="UniProtKB" id="P23634"/>
    </source>
</evidence>
<evidence type="ECO:0000250" key="5">
    <source>
        <dbReference type="UniProtKB" id="Q6Q477"/>
    </source>
</evidence>
<evidence type="ECO:0000255" key="6"/>
<evidence type="ECO:0000256" key="7">
    <source>
        <dbReference type="SAM" id="MobiDB-lite"/>
    </source>
</evidence>
<evidence type="ECO:0000269" key="8">
    <source>
    </source>
</evidence>
<evidence type="ECO:0000269" key="9">
    <source>
    </source>
</evidence>
<evidence type="ECO:0000303" key="10">
    <source>
    </source>
</evidence>
<evidence type="ECO:0000303" key="11">
    <source>
    </source>
</evidence>
<evidence type="ECO:0000305" key="12"/>
<evidence type="ECO:0000312" key="13">
    <source>
        <dbReference type="RGD" id="621305"/>
    </source>
</evidence>
<evidence type="ECO:0007744" key="14">
    <source>
    </source>
</evidence>